<reference key="1">
    <citation type="journal article" date="1997" name="Microbiology">
        <title>Sequencing and functional annotation of the Bacillus subtilis genes in the 200 kb rrnB-dnaB region.</title>
        <authorList>
            <person name="Lapidus A."/>
            <person name="Galleron N."/>
            <person name="Sorokin A."/>
            <person name="Ehrlich S.D."/>
        </authorList>
    </citation>
    <scope>NUCLEOTIDE SEQUENCE [GENOMIC DNA]</scope>
    <source>
        <strain>168</strain>
    </source>
</reference>
<reference key="2">
    <citation type="journal article" date="1997" name="Nature">
        <title>The complete genome sequence of the Gram-positive bacterium Bacillus subtilis.</title>
        <authorList>
            <person name="Kunst F."/>
            <person name="Ogasawara N."/>
            <person name="Moszer I."/>
            <person name="Albertini A.M."/>
            <person name="Alloni G."/>
            <person name="Azevedo V."/>
            <person name="Bertero M.G."/>
            <person name="Bessieres P."/>
            <person name="Bolotin A."/>
            <person name="Borchert S."/>
            <person name="Borriss R."/>
            <person name="Boursier L."/>
            <person name="Brans A."/>
            <person name="Braun M."/>
            <person name="Brignell S.C."/>
            <person name="Bron S."/>
            <person name="Brouillet S."/>
            <person name="Bruschi C.V."/>
            <person name="Caldwell B."/>
            <person name="Capuano V."/>
            <person name="Carter N.M."/>
            <person name="Choi S.-K."/>
            <person name="Codani J.-J."/>
            <person name="Connerton I.F."/>
            <person name="Cummings N.J."/>
            <person name="Daniel R.A."/>
            <person name="Denizot F."/>
            <person name="Devine K.M."/>
            <person name="Duesterhoeft A."/>
            <person name="Ehrlich S.D."/>
            <person name="Emmerson P.T."/>
            <person name="Entian K.-D."/>
            <person name="Errington J."/>
            <person name="Fabret C."/>
            <person name="Ferrari E."/>
            <person name="Foulger D."/>
            <person name="Fritz C."/>
            <person name="Fujita M."/>
            <person name="Fujita Y."/>
            <person name="Fuma S."/>
            <person name="Galizzi A."/>
            <person name="Galleron N."/>
            <person name="Ghim S.-Y."/>
            <person name="Glaser P."/>
            <person name="Goffeau A."/>
            <person name="Golightly E.J."/>
            <person name="Grandi G."/>
            <person name="Guiseppi G."/>
            <person name="Guy B.J."/>
            <person name="Haga K."/>
            <person name="Haiech J."/>
            <person name="Harwood C.R."/>
            <person name="Henaut A."/>
            <person name="Hilbert H."/>
            <person name="Holsappel S."/>
            <person name="Hosono S."/>
            <person name="Hullo M.-F."/>
            <person name="Itaya M."/>
            <person name="Jones L.-M."/>
            <person name="Joris B."/>
            <person name="Karamata D."/>
            <person name="Kasahara Y."/>
            <person name="Klaerr-Blanchard M."/>
            <person name="Klein C."/>
            <person name="Kobayashi Y."/>
            <person name="Koetter P."/>
            <person name="Koningstein G."/>
            <person name="Krogh S."/>
            <person name="Kumano M."/>
            <person name="Kurita K."/>
            <person name="Lapidus A."/>
            <person name="Lardinois S."/>
            <person name="Lauber J."/>
            <person name="Lazarevic V."/>
            <person name="Lee S.-M."/>
            <person name="Levine A."/>
            <person name="Liu H."/>
            <person name="Masuda S."/>
            <person name="Mauel C."/>
            <person name="Medigue C."/>
            <person name="Medina N."/>
            <person name="Mellado R.P."/>
            <person name="Mizuno M."/>
            <person name="Moestl D."/>
            <person name="Nakai S."/>
            <person name="Noback M."/>
            <person name="Noone D."/>
            <person name="O'Reilly M."/>
            <person name="Ogawa K."/>
            <person name="Ogiwara A."/>
            <person name="Oudega B."/>
            <person name="Park S.-H."/>
            <person name="Parro V."/>
            <person name="Pohl T.M."/>
            <person name="Portetelle D."/>
            <person name="Porwollik S."/>
            <person name="Prescott A.M."/>
            <person name="Presecan E."/>
            <person name="Pujic P."/>
            <person name="Purnelle B."/>
            <person name="Rapoport G."/>
            <person name="Rey M."/>
            <person name="Reynolds S."/>
            <person name="Rieger M."/>
            <person name="Rivolta C."/>
            <person name="Rocha E."/>
            <person name="Roche B."/>
            <person name="Rose M."/>
            <person name="Sadaie Y."/>
            <person name="Sato T."/>
            <person name="Scanlan E."/>
            <person name="Schleich S."/>
            <person name="Schroeter R."/>
            <person name="Scoffone F."/>
            <person name="Sekiguchi J."/>
            <person name="Sekowska A."/>
            <person name="Seror S.J."/>
            <person name="Serror P."/>
            <person name="Shin B.-S."/>
            <person name="Soldo B."/>
            <person name="Sorokin A."/>
            <person name="Tacconi E."/>
            <person name="Takagi T."/>
            <person name="Takahashi H."/>
            <person name="Takemaru K."/>
            <person name="Takeuchi M."/>
            <person name="Tamakoshi A."/>
            <person name="Tanaka T."/>
            <person name="Terpstra P."/>
            <person name="Tognoni A."/>
            <person name="Tosato V."/>
            <person name="Uchiyama S."/>
            <person name="Vandenbol M."/>
            <person name="Vannier F."/>
            <person name="Vassarotti A."/>
            <person name="Viari A."/>
            <person name="Wambutt R."/>
            <person name="Wedler E."/>
            <person name="Wedler H."/>
            <person name="Weitzenegger T."/>
            <person name="Winters P."/>
            <person name="Wipat A."/>
            <person name="Yamamoto H."/>
            <person name="Yamane K."/>
            <person name="Yasumoto K."/>
            <person name="Yata K."/>
            <person name="Yoshida K."/>
            <person name="Yoshikawa H.-F."/>
            <person name="Zumstein E."/>
            <person name="Yoshikawa H."/>
            <person name="Danchin A."/>
        </authorList>
    </citation>
    <scope>NUCLEOTIDE SEQUENCE [LARGE SCALE GENOMIC DNA]</scope>
    <source>
        <strain>168</strain>
    </source>
</reference>
<proteinExistence type="evidence at protein level"/>
<feature type="chain" id="PRO_0000148888" description="Uncharacterized HTH-type transcriptional regulator YtcD">
    <location>
        <begin position="1"/>
        <end position="126"/>
    </location>
</feature>
<feature type="domain" description="HTH hxlR-type" evidence="1">
    <location>
        <begin position="8"/>
        <end position="106"/>
    </location>
</feature>
<feature type="helix" evidence="2">
    <location>
        <begin position="10"/>
        <end position="17"/>
    </location>
</feature>
<feature type="helix" evidence="2">
    <location>
        <begin position="22"/>
        <end position="29"/>
    </location>
</feature>
<feature type="helix" evidence="2">
    <location>
        <begin position="36"/>
        <end position="42"/>
    </location>
</feature>
<feature type="helix" evidence="2">
    <location>
        <begin position="48"/>
        <end position="60"/>
    </location>
</feature>
<feature type="strand" evidence="2">
    <location>
        <begin position="63"/>
        <end position="69"/>
    </location>
</feature>
<feature type="strand" evidence="2">
    <location>
        <begin position="71"/>
        <end position="73"/>
    </location>
</feature>
<feature type="strand" evidence="2">
    <location>
        <begin position="75"/>
        <end position="80"/>
    </location>
</feature>
<feature type="helix" evidence="2">
    <location>
        <begin position="84"/>
        <end position="87"/>
    </location>
</feature>
<feature type="helix" evidence="2">
    <location>
        <begin position="88"/>
        <end position="102"/>
    </location>
</feature>
<organism>
    <name type="scientific">Bacillus subtilis (strain 168)</name>
    <dbReference type="NCBI Taxonomy" id="224308"/>
    <lineage>
        <taxon>Bacteria</taxon>
        <taxon>Bacillati</taxon>
        <taxon>Bacillota</taxon>
        <taxon>Bacilli</taxon>
        <taxon>Bacillales</taxon>
        <taxon>Bacillaceae</taxon>
        <taxon>Bacillus</taxon>
    </lineage>
</organism>
<name>YTCD_BACSU</name>
<gene>
    <name type="primary">ytcD</name>
    <name type="ordered locus">BSU29030</name>
</gene>
<sequence>MEKKKYNISVEATLEVIGGKWKCVILCHLTHGKKRTSELKRLMPNITQKMLTQQLRELEADGVINRIVYNQVPPKVEYELSEYGRSLEGILDMLCAWGANHINRVYGDTFSVLEESVLNDKLKQES</sequence>
<keyword id="KW-0002">3D-structure</keyword>
<keyword id="KW-0238">DNA-binding</keyword>
<keyword id="KW-1185">Reference proteome</keyword>
<keyword id="KW-0804">Transcription</keyword>
<keyword id="KW-0805">Transcription regulation</keyword>
<accession>O34533</accession>
<protein>
    <recommendedName>
        <fullName>Uncharacterized HTH-type transcriptional regulator YtcD</fullName>
    </recommendedName>
</protein>
<evidence type="ECO:0000255" key="1">
    <source>
        <dbReference type="PROSITE-ProRule" id="PRU00435"/>
    </source>
</evidence>
<evidence type="ECO:0007829" key="2">
    <source>
        <dbReference type="PDB" id="2HZT"/>
    </source>
</evidence>
<dbReference type="EMBL" id="AF008220">
    <property type="protein sequence ID" value="AAC00354.1"/>
    <property type="molecule type" value="Genomic_DNA"/>
</dbReference>
<dbReference type="EMBL" id="AL009126">
    <property type="protein sequence ID" value="CAB14863.1"/>
    <property type="molecule type" value="Genomic_DNA"/>
</dbReference>
<dbReference type="PIR" id="B69989">
    <property type="entry name" value="B69989"/>
</dbReference>
<dbReference type="RefSeq" id="NP_390781.1">
    <property type="nucleotide sequence ID" value="NC_000964.3"/>
</dbReference>
<dbReference type="RefSeq" id="WP_003229458.1">
    <property type="nucleotide sequence ID" value="NZ_OZ025638.1"/>
</dbReference>
<dbReference type="PDB" id="2HZT">
    <property type="method" value="X-ray"/>
    <property type="resolution" value="2.00 A"/>
    <property type="chains" value="A/B/C/D=10-105"/>
</dbReference>
<dbReference type="PDBsum" id="2HZT"/>
<dbReference type="SMR" id="O34533"/>
<dbReference type="FunCoup" id="O34533">
    <property type="interactions" value="80"/>
</dbReference>
<dbReference type="STRING" id="224308.BSU29030"/>
<dbReference type="PaxDb" id="224308-BSU29030"/>
<dbReference type="DNASU" id="936607"/>
<dbReference type="EnsemblBacteria" id="CAB14863">
    <property type="protein sequence ID" value="CAB14863"/>
    <property type="gene ID" value="BSU_29030"/>
</dbReference>
<dbReference type="GeneID" id="936607"/>
<dbReference type="KEGG" id="bsu:BSU29030"/>
<dbReference type="PATRIC" id="fig|224308.179.peg.3152"/>
<dbReference type="eggNOG" id="COG1733">
    <property type="taxonomic scope" value="Bacteria"/>
</dbReference>
<dbReference type="InParanoid" id="O34533"/>
<dbReference type="OrthoDB" id="9791143at2"/>
<dbReference type="PhylomeDB" id="O34533"/>
<dbReference type="BioCyc" id="BSUB:BSU29030-MONOMER"/>
<dbReference type="EvolutionaryTrace" id="O34533"/>
<dbReference type="Proteomes" id="UP000001570">
    <property type="component" value="Chromosome"/>
</dbReference>
<dbReference type="GO" id="GO:0003677">
    <property type="term" value="F:DNA binding"/>
    <property type="evidence" value="ECO:0007669"/>
    <property type="project" value="UniProtKB-KW"/>
</dbReference>
<dbReference type="Gene3D" id="1.10.10.10">
    <property type="entry name" value="Winged helix-like DNA-binding domain superfamily/Winged helix DNA-binding domain"/>
    <property type="match status" value="1"/>
</dbReference>
<dbReference type="InterPro" id="IPR002577">
    <property type="entry name" value="HTH_HxlR"/>
</dbReference>
<dbReference type="InterPro" id="IPR036388">
    <property type="entry name" value="WH-like_DNA-bd_sf"/>
</dbReference>
<dbReference type="InterPro" id="IPR036390">
    <property type="entry name" value="WH_DNA-bd_sf"/>
</dbReference>
<dbReference type="PANTHER" id="PTHR33204:SF29">
    <property type="entry name" value="TRANSCRIPTIONAL REGULATOR"/>
    <property type="match status" value="1"/>
</dbReference>
<dbReference type="PANTHER" id="PTHR33204">
    <property type="entry name" value="TRANSCRIPTIONAL REGULATOR, MARR FAMILY"/>
    <property type="match status" value="1"/>
</dbReference>
<dbReference type="Pfam" id="PF01638">
    <property type="entry name" value="HxlR"/>
    <property type="match status" value="1"/>
</dbReference>
<dbReference type="SUPFAM" id="SSF46785">
    <property type="entry name" value="Winged helix' DNA-binding domain"/>
    <property type="match status" value="1"/>
</dbReference>
<dbReference type="PROSITE" id="PS51118">
    <property type="entry name" value="HTH_HXLR"/>
    <property type="match status" value="1"/>
</dbReference>